<reference key="1">
    <citation type="journal article" date="1990" name="Biochemistry">
        <title>Nucleotide sequence and expression of a cDNA encoding chick brain actin depolymerizing factor.</title>
        <authorList>
            <person name="Adams M.E."/>
            <person name="Minamide L.S."/>
            <person name="Duester G."/>
            <person name="Bamburg J.R."/>
        </authorList>
    </citation>
    <scope>NUCLEOTIDE SEQUENCE [MRNA]</scope>
    <scope>PROTEIN SEQUENCE OF 101-111 AND 116-134</scope>
    <source>
        <tissue>Brain</tissue>
    </source>
</reference>
<reference key="2">
    <citation type="journal article" date="1990" name="Biochemistry">
        <title>Sequence of cDNAs encoding actin depolymerizing factor and cofilin of embryonic chicken skeletal muscle: two functionally distinct actin-regulatory proteins exhibit high structural homology.</title>
        <authorList>
            <person name="Abe H."/>
            <person name="Endo T."/>
            <person name="Yamamoto K."/>
            <person name="Obinata T."/>
        </authorList>
    </citation>
    <scope>NUCLEOTIDE SEQUENCE [MRNA]</scope>
    <source>
        <tissue>Skeletal muscle</tissue>
    </source>
</reference>
<reference key="3">
    <citation type="journal article" date="2005" name="Genome Biol.">
        <title>Full-length cDNAs from chicken bursal lymphocytes to facilitate gene function analysis.</title>
        <authorList>
            <person name="Caldwell R.B."/>
            <person name="Kierzek A.M."/>
            <person name="Arakawa H."/>
            <person name="Bezzubov Y."/>
            <person name="Zaim J."/>
            <person name="Fiedler P."/>
            <person name="Kutter S."/>
            <person name="Blagodatski A."/>
            <person name="Kostovska D."/>
            <person name="Koter M."/>
            <person name="Plachy J."/>
            <person name="Carninci P."/>
            <person name="Hayashizaki Y."/>
            <person name="Buerstedde J.-M."/>
        </authorList>
    </citation>
    <scope>NUCLEOTIDE SEQUENCE [LARGE SCALE MRNA]</scope>
    <source>
        <strain>CB</strain>
        <tissue>Bursa of Fabricius</tissue>
    </source>
</reference>
<keyword id="KW-0007">Acetylation</keyword>
<keyword id="KW-0009">Actin-binding</keyword>
<keyword id="KW-0903">Direct protein sequencing</keyword>
<keyword id="KW-1185">Reference proteome</keyword>
<comment type="function">
    <text evidence="2 3">Actin-depolymerizing protein. Severs actin filaments (F-actin) and binds to actin monomers (G-actin). Acts in a pH-independent manner.</text>
</comment>
<comment type="similarity">
    <text evidence="6">Belongs to the actin-binding proteins ADF family.</text>
</comment>
<sequence length="165" mass="18533">MASGVQVADEVCRIFYDMKVRKCSTPEEVKKRKKAVIFCLSPDKKCIIVEEGKEILVGDVGVTVTDPFKHFVEMLPEKDCRYALYDASFETKESKKEELMFFLWAPEQAPLKSKMIYASSKDAIKKKFQGIKHECQANGPEDLNRACIAEKLGGSLVVAFEGSPV</sequence>
<evidence type="ECO:0000250" key="1"/>
<evidence type="ECO:0000250" key="2">
    <source>
        <dbReference type="UniProtKB" id="P60981"/>
    </source>
</evidence>
<evidence type="ECO:0000250" key="3">
    <source>
        <dbReference type="UniProtKB" id="Q9R0P5"/>
    </source>
</evidence>
<evidence type="ECO:0000255" key="4"/>
<evidence type="ECO:0000255" key="5">
    <source>
        <dbReference type="PROSITE-ProRule" id="PRU00599"/>
    </source>
</evidence>
<evidence type="ECO:0000305" key="6"/>
<accession>P18359</accession>
<accession>Q5ZLP1</accession>
<name>DEST_CHICK</name>
<gene>
    <name type="primary">DSTN</name>
    <name type="synonym">DSN</name>
    <name type="ORF">RCJMB04_5f14</name>
</gene>
<feature type="initiator methionine" description="Removed" evidence="1">
    <location>
        <position position="1"/>
    </location>
</feature>
<feature type="chain" id="PRO_0000214922" description="Destrin">
    <location>
        <begin position="2"/>
        <end position="165"/>
    </location>
</feature>
<feature type="domain" description="ADF-H" evidence="5">
    <location>
        <begin position="4"/>
        <end position="153"/>
    </location>
</feature>
<feature type="short sequence motif" description="Nuclear localization signal" evidence="4">
    <location>
        <begin position="30"/>
        <end position="34"/>
    </location>
</feature>
<feature type="modified residue" description="N-acetylalanine" evidence="1">
    <location>
        <position position="2"/>
    </location>
</feature>
<feature type="sequence conflict" description="In Ref. 3; CAG31352." evidence="6" ref="3">
    <original>E</original>
    <variation>Q</variation>
    <location>
        <position position="73"/>
    </location>
</feature>
<proteinExistence type="evidence at protein level"/>
<protein>
    <recommendedName>
        <fullName>Destrin</fullName>
    </recommendedName>
    <alternativeName>
        <fullName>Actin-depolymerizing factor</fullName>
        <shortName>ADF</shortName>
    </alternativeName>
</protein>
<dbReference type="EMBL" id="J02912">
    <property type="protein sequence ID" value="AAA48575.1"/>
    <property type="molecule type" value="mRNA"/>
</dbReference>
<dbReference type="EMBL" id="M55660">
    <property type="protein sequence ID" value="AAA48573.1"/>
    <property type="molecule type" value="mRNA"/>
</dbReference>
<dbReference type="EMBL" id="AJ719693">
    <property type="protein sequence ID" value="CAG31352.1"/>
    <property type="molecule type" value="mRNA"/>
</dbReference>
<dbReference type="PIR" id="A35702">
    <property type="entry name" value="A35702"/>
</dbReference>
<dbReference type="RefSeq" id="NP_990859.1">
    <property type="nucleotide sequence ID" value="NM_205528.1"/>
</dbReference>
<dbReference type="SMR" id="P18359"/>
<dbReference type="BioGRID" id="676783">
    <property type="interactions" value="2"/>
</dbReference>
<dbReference type="FunCoup" id="P18359">
    <property type="interactions" value="2430"/>
</dbReference>
<dbReference type="IntAct" id="P18359">
    <property type="interactions" value="1"/>
</dbReference>
<dbReference type="STRING" id="9031.ENSGALP00000014097"/>
<dbReference type="iPTMnet" id="P18359"/>
<dbReference type="PaxDb" id="9031-ENSGALP00000014097"/>
<dbReference type="GeneID" id="396539"/>
<dbReference type="KEGG" id="gga:396539"/>
<dbReference type="CTD" id="11034"/>
<dbReference type="VEuPathDB" id="HostDB:geneid_396539"/>
<dbReference type="eggNOG" id="KOG1735">
    <property type="taxonomic scope" value="Eukaryota"/>
</dbReference>
<dbReference type="InParanoid" id="P18359"/>
<dbReference type="OrthoDB" id="10249245at2759"/>
<dbReference type="PhylomeDB" id="P18359"/>
<dbReference type="TreeFam" id="TF328601"/>
<dbReference type="PRO" id="PR:P18359"/>
<dbReference type="Proteomes" id="UP000000539">
    <property type="component" value="Unassembled WGS sequence"/>
</dbReference>
<dbReference type="GO" id="GO:0015629">
    <property type="term" value="C:actin cytoskeleton"/>
    <property type="evidence" value="ECO:0000318"/>
    <property type="project" value="GO_Central"/>
</dbReference>
<dbReference type="GO" id="GO:0005737">
    <property type="term" value="C:cytoplasm"/>
    <property type="evidence" value="ECO:0000318"/>
    <property type="project" value="GO_Central"/>
</dbReference>
<dbReference type="GO" id="GO:0051015">
    <property type="term" value="F:actin filament binding"/>
    <property type="evidence" value="ECO:0000250"/>
    <property type="project" value="UniProtKB"/>
</dbReference>
<dbReference type="GO" id="GO:0030043">
    <property type="term" value="P:actin filament fragmentation"/>
    <property type="evidence" value="ECO:0000318"/>
    <property type="project" value="GO_Central"/>
</dbReference>
<dbReference type="GO" id="GO:0051014">
    <property type="term" value="P:actin filament severing"/>
    <property type="evidence" value="ECO:0000318"/>
    <property type="project" value="GO_Central"/>
</dbReference>
<dbReference type="CDD" id="cd11286">
    <property type="entry name" value="ADF_cofilin_like"/>
    <property type="match status" value="1"/>
</dbReference>
<dbReference type="FunFam" id="3.40.20.10:FF:000010">
    <property type="entry name" value="Putative destrin"/>
    <property type="match status" value="1"/>
</dbReference>
<dbReference type="Gene3D" id="3.40.20.10">
    <property type="entry name" value="Severin"/>
    <property type="match status" value="1"/>
</dbReference>
<dbReference type="InterPro" id="IPR002108">
    <property type="entry name" value="ADF-H"/>
</dbReference>
<dbReference type="InterPro" id="IPR029006">
    <property type="entry name" value="ADF-H/Gelsolin-like_dom_sf"/>
</dbReference>
<dbReference type="InterPro" id="IPR017904">
    <property type="entry name" value="ADF/Cofilin"/>
</dbReference>
<dbReference type="PANTHER" id="PTHR11913">
    <property type="entry name" value="COFILIN-RELATED"/>
    <property type="match status" value="1"/>
</dbReference>
<dbReference type="Pfam" id="PF00241">
    <property type="entry name" value="Cofilin_ADF"/>
    <property type="match status" value="1"/>
</dbReference>
<dbReference type="PRINTS" id="PR00006">
    <property type="entry name" value="COFILIN"/>
</dbReference>
<dbReference type="SMART" id="SM00102">
    <property type="entry name" value="ADF"/>
    <property type="match status" value="1"/>
</dbReference>
<dbReference type="SUPFAM" id="SSF55753">
    <property type="entry name" value="Actin depolymerizing proteins"/>
    <property type="match status" value="1"/>
</dbReference>
<dbReference type="PROSITE" id="PS51263">
    <property type="entry name" value="ADF_H"/>
    <property type="match status" value="1"/>
</dbReference>
<organism>
    <name type="scientific">Gallus gallus</name>
    <name type="common">Chicken</name>
    <dbReference type="NCBI Taxonomy" id="9031"/>
    <lineage>
        <taxon>Eukaryota</taxon>
        <taxon>Metazoa</taxon>
        <taxon>Chordata</taxon>
        <taxon>Craniata</taxon>
        <taxon>Vertebrata</taxon>
        <taxon>Euteleostomi</taxon>
        <taxon>Archelosauria</taxon>
        <taxon>Archosauria</taxon>
        <taxon>Dinosauria</taxon>
        <taxon>Saurischia</taxon>
        <taxon>Theropoda</taxon>
        <taxon>Coelurosauria</taxon>
        <taxon>Aves</taxon>
        <taxon>Neognathae</taxon>
        <taxon>Galloanserae</taxon>
        <taxon>Galliformes</taxon>
        <taxon>Phasianidae</taxon>
        <taxon>Phasianinae</taxon>
        <taxon>Gallus</taxon>
    </lineage>
</organism>